<reference key="1">
    <citation type="journal article" date="2006" name="Proc. Natl. Acad. Sci. U.S.A.">
        <title>Burkholderia xenovorans LB400 harbors a multi-replicon, 9.73-Mbp genome shaped for versatility.</title>
        <authorList>
            <person name="Chain P.S.G."/>
            <person name="Denef V.J."/>
            <person name="Konstantinidis K.T."/>
            <person name="Vergez L.M."/>
            <person name="Agullo L."/>
            <person name="Reyes V.L."/>
            <person name="Hauser L."/>
            <person name="Cordova M."/>
            <person name="Gomez L."/>
            <person name="Gonzalez M."/>
            <person name="Land M."/>
            <person name="Lao V."/>
            <person name="Larimer F."/>
            <person name="LiPuma J.J."/>
            <person name="Mahenthiralingam E."/>
            <person name="Malfatti S.A."/>
            <person name="Marx C.J."/>
            <person name="Parnell J.J."/>
            <person name="Ramette A."/>
            <person name="Richardson P."/>
            <person name="Seeger M."/>
            <person name="Smith D."/>
            <person name="Spilker T."/>
            <person name="Sul W.J."/>
            <person name="Tsoi T.V."/>
            <person name="Ulrich L.E."/>
            <person name="Zhulin I.B."/>
            <person name="Tiedje J.M."/>
        </authorList>
    </citation>
    <scope>NUCLEOTIDE SEQUENCE [LARGE SCALE GENOMIC DNA]</scope>
    <source>
        <strain>LB400</strain>
    </source>
</reference>
<comment type="function">
    <text evidence="1">NDH-1 shuttles electrons from NADH, via FMN and iron-sulfur (Fe-S) centers, to quinones in the respiratory chain. The immediate electron acceptor for the enzyme in this species is believed to be ubiquinone. Couples the redox reaction to proton translocation (for every two electrons transferred, four hydrogen ions are translocated across the cytoplasmic membrane), and thus conserves the redox energy in a proton gradient.</text>
</comment>
<comment type="catalytic activity">
    <reaction evidence="1">
        <text>a quinone + NADH + 5 H(+)(in) = a quinol + NAD(+) + 4 H(+)(out)</text>
        <dbReference type="Rhea" id="RHEA:57888"/>
        <dbReference type="ChEBI" id="CHEBI:15378"/>
        <dbReference type="ChEBI" id="CHEBI:24646"/>
        <dbReference type="ChEBI" id="CHEBI:57540"/>
        <dbReference type="ChEBI" id="CHEBI:57945"/>
        <dbReference type="ChEBI" id="CHEBI:132124"/>
    </reaction>
</comment>
<comment type="subunit">
    <text evidence="1">NDH-1 is composed of 14 different subunits. Subunits NuoA, H, J, K, L, M, N constitute the membrane sector of the complex.</text>
</comment>
<comment type="subcellular location">
    <subcellularLocation>
        <location evidence="1">Cell inner membrane</location>
        <topology evidence="1">Multi-pass membrane protein</topology>
    </subcellularLocation>
</comment>
<comment type="similarity">
    <text evidence="1">Belongs to the complex I subunit 3 family.</text>
</comment>
<gene>
    <name evidence="1" type="primary">nuoA</name>
    <name type="ordered locus">Bxeno_A1228</name>
    <name type="ORF">Bxe_A3214</name>
</gene>
<feature type="chain" id="PRO_0000362652" description="NADH-quinone oxidoreductase subunit A">
    <location>
        <begin position="1"/>
        <end position="119"/>
    </location>
</feature>
<feature type="transmembrane region" description="Helical" evidence="1">
    <location>
        <begin position="7"/>
        <end position="27"/>
    </location>
</feature>
<feature type="transmembrane region" description="Helical" evidence="1">
    <location>
        <begin position="63"/>
        <end position="83"/>
    </location>
</feature>
<feature type="transmembrane region" description="Helical" evidence="1">
    <location>
        <begin position="88"/>
        <end position="108"/>
    </location>
</feature>
<name>NUOA_PARXL</name>
<keyword id="KW-0997">Cell inner membrane</keyword>
<keyword id="KW-1003">Cell membrane</keyword>
<keyword id="KW-0472">Membrane</keyword>
<keyword id="KW-0520">NAD</keyword>
<keyword id="KW-0874">Quinone</keyword>
<keyword id="KW-1185">Reference proteome</keyword>
<keyword id="KW-1278">Translocase</keyword>
<keyword id="KW-0812">Transmembrane</keyword>
<keyword id="KW-1133">Transmembrane helix</keyword>
<keyword id="KW-0813">Transport</keyword>
<keyword id="KW-0830">Ubiquinone</keyword>
<sequence>MNLAAYFPVLLFLIVGTGLGVALVSIGKILGPNKPDTEKNAPYECGFEAFEDARMKFDVRYYLVAILFIIFDLETAFLFPWGVALRDIGWPGFMAMMIFLLEFLLGFAYIWKKGGLDWE</sequence>
<protein>
    <recommendedName>
        <fullName evidence="1">NADH-quinone oxidoreductase subunit A</fullName>
        <ecNumber evidence="1">7.1.1.-</ecNumber>
    </recommendedName>
    <alternativeName>
        <fullName evidence="1">NADH dehydrogenase I subunit A</fullName>
    </alternativeName>
    <alternativeName>
        <fullName evidence="1">NDH-1 subunit A</fullName>
    </alternativeName>
    <alternativeName>
        <fullName evidence="1">NUO1</fullName>
    </alternativeName>
</protein>
<accession>Q142H3</accession>
<proteinExistence type="inferred from homology"/>
<organism>
    <name type="scientific">Paraburkholderia xenovorans (strain LB400)</name>
    <dbReference type="NCBI Taxonomy" id="266265"/>
    <lineage>
        <taxon>Bacteria</taxon>
        <taxon>Pseudomonadati</taxon>
        <taxon>Pseudomonadota</taxon>
        <taxon>Betaproteobacteria</taxon>
        <taxon>Burkholderiales</taxon>
        <taxon>Burkholderiaceae</taxon>
        <taxon>Paraburkholderia</taxon>
    </lineage>
</organism>
<dbReference type="EC" id="7.1.1.-" evidence="1"/>
<dbReference type="EMBL" id="CP000270">
    <property type="protein sequence ID" value="ABE29766.1"/>
    <property type="molecule type" value="Genomic_DNA"/>
</dbReference>
<dbReference type="RefSeq" id="WP_007175615.1">
    <property type="nucleotide sequence ID" value="NZ_CP008760.1"/>
</dbReference>
<dbReference type="SMR" id="Q142H3"/>
<dbReference type="STRING" id="266265.Bxe_A3214"/>
<dbReference type="KEGG" id="bxb:DR64_916"/>
<dbReference type="KEGG" id="bxe:Bxe_A3214"/>
<dbReference type="eggNOG" id="COG0838">
    <property type="taxonomic scope" value="Bacteria"/>
</dbReference>
<dbReference type="OrthoDB" id="9791970at2"/>
<dbReference type="Proteomes" id="UP000001817">
    <property type="component" value="Chromosome 1"/>
</dbReference>
<dbReference type="GO" id="GO:0030964">
    <property type="term" value="C:NADH dehydrogenase complex"/>
    <property type="evidence" value="ECO:0007669"/>
    <property type="project" value="TreeGrafter"/>
</dbReference>
<dbReference type="GO" id="GO:0005886">
    <property type="term" value="C:plasma membrane"/>
    <property type="evidence" value="ECO:0007669"/>
    <property type="project" value="UniProtKB-SubCell"/>
</dbReference>
<dbReference type="GO" id="GO:0008137">
    <property type="term" value="F:NADH dehydrogenase (ubiquinone) activity"/>
    <property type="evidence" value="ECO:0007669"/>
    <property type="project" value="InterPro"/>
</dbReference>
<dbReference type="GO" id="GO:0050136">
    <property type="term" value="F:NADH:ubiquinone reductase (non-electrogenic) activity"/>
    <property type="evidence" value="ECO:0007669"/>
    <property type="project" value="UniProtKB-UniRule"/>
</dbReference>
<dbReference type="GO" id="GO:0048038">
    <property type="term" value="F:quinone binding"/>
    <property type="evidence" value="ECO:0007669"/>
    <property type="project" value="UniProtKB-KW"/>
</dbReference>
<dbReference type="FunFam" id="1.20.58.1610:FF:000004">
    <property type="entry name" value="NADH-quinone oxidoreductase subunit A"/>
    <property type="match status" value="1"/>
</dbReference>
<dbReference type="Gene3D" id="1.20.58.1610">
    <property type="entry name" value="NADH:ubiquinone/plastoquinone oxidoreductase, chain 3"/>
    <property type="match status" value="1"/>
</dbReference>
<dbReference type="HAMAP" id="MF_01394">
    <property type="entry name" value="NDH1_NuoA"/>
    <property type="match status" value="1"/>
</dbReference>
<dbReference type="InterPro" id="IPR023043">
    <property type="entry name" value="NAD(P)H_OxRDtase_bac/plastid"/>
</dbReference>
<dbReference type="InterPro" id="IPR000440">
    <property type="entry name" value="NADH_UbQ/plastoQ_OxRdtase_su3"/>
</dbReference>
<dbReference type="InterPro" id="IPR038430">
    <property type="entry name" value="NDAH_ubi_oxred_su3_sf"/>
</dbReference>
<dbReference type="PANTHER" id="PTHR11058">
    <property type="entry name" value="NADH-UBIQUINONE OXIDOREDUCTASE CHAIN 3"/>
    <property type="match status" value="1"/>
</dbReference>
<dbReference type="PANTHER" id="PTHR11058:SF9">
    <property type="entry name" value="NADH-UBIQUINONE OXIDOREDUCTASE CHAIN 3"/>
    <property type="match status" value="1"/>
</dbReference>
<dbReference type="Pfam" id="PF00507">
    <property type="entry name" value="Oxidored_q4"/>
    <property type="match status" value="1"/>
</dbReference>
<evidence type="ECO:0000255" key="1">
    <source>
        <dbReference type="HAMAP-Rule" id="MF_01394"/>
    </source>
</evidence>